<protein>
    <recommendedName>
        <fullName evidence="3">Small ribosomal subunit protein bS1</fullName>
    </recommendedName>
    <alternativeName>
        <fullName>30S ribosomal protein S1</fullName>
    </alternativeName>
</protein>
<proteinExistence type="evidence at protein level"/>
<gene>
    <name type="primary">rpsA</name>
    <name type="ordered locus">NMB1301</name>
</gene>
<evidence type="ECO:0000250" key="1"/>
<evidence type="ECO:0000255" key="2">
    <source>
        <dbReference type="PROSITE-ProRule" id="PRU00180"/>
    </source>
</evidence>
<evidence type="ECO:0000305" key="3"/>
<name>RS1_NEIMB</name>
<organism>
    <name type="scientific">Neisseria meningitidis serogroup B (strain ATCC BAA-335 / MC58)</name>
    <dbReference type="NCBI Taxonomy" id="122586"/>
    <lineage>
        <taxon>Bacteria</taxon>
        <taxon>Pseudomonadati</taxon>
        <taxon>Pseudomonadota</taxon>
        <taxon>Betaproteobacteria</taxon>
        <taxon>Neisseriales</taxon>
        <taxon>Neisseriaceae</taxon>
        <taxon>Neisseria</taxon>
    </lineage>
</organism>
<keyword id="KW-1185">Reference proteome</keyword>
<keyword id="KW-0677">Repeat</keyword>
<keyword id="KW-0687">Ribonucleoprotein</keyword>
<keyword id="KW-0689">Ribosomal protein</keyword>
<keyword id="KW-0694">RNA-binding</keyword>
<accession>Q9JZ44</accession>
<dbReference type="EMBL" id="AE002098">
    <property type="protein sequence ID" value="AAF41676.1"/>
    <property type="molecule type" value="Genomic_DNA"/>
</dbReference>
<dbReference type="PIR" id="G81099">
    <property type="entry name" value="G81099"/>
</dbReference>
<dbReference type="RefSeq" id="NP_274320.1">
    <property type="nucleotide sequence ID" value="NC_003112.2"/>
</dbReference>
<dbReference type="RefSeq" id="WP_002237993.1">
    <property type="nucleotide sequence ID" value="NC_003112.2"/>
</dbReference>
<dbReference type="SMR" id="Q9JZ44"/>
<dbReference type="FunCoup" id="Q9JZ44">
    <property type="interactions" value="499"/>
</dbReference>
<dbReference type="STRING" id="122586.NMB1301"/>
<dbReference type="PaxDb" id="122586-NMB1301"/>
<dbReference type="KEGG" id="nme:NMB1301"/>
<dbReference type="PATRIC" id="fig|122586.8.peg.1633"/>
<dbReference type="HOGENOM" id="CLU_015805_2_1_4"/>
<dbReference type="InParanoid" id="Q9JZ44"/>
<dbReference type="OrthoDB" id="9804077at2"/>
<dbReference type="Proteomes" id="UP000000425">
    <property type="component" value="Chromosome"/>
</dbReference>
<dbReference type="GO" id="GO:0022627">
    <property type="term" value="C:cytosolic small ribosomal subunit"/>
    <property type="evidence" value="ECO:0000318"/>
    <property type="project" value="GO_Central"/>
</dbReference>
<dbReference type="GO" id="GO:0003729">
    <property type="term" value="F:mRNA binding"/>
    <property type="evidence" value="ECO:0000318"/>
    <property type="project" value="GO_Central"/>
</dbReference>
<dbReference type="GO" id="GO:0003735">
    <property type="term" value="F:structural constituent of ribosome"/>
    <property type="evidence" value="ECO:0000318"/>
    <property type="project" value="GO_Central"/>
</dbReference>
<dbReference type="GO" id="GO:0006412">
    <property type="term" value="P:translation"/>
    <property type="evidence" value="ECO:0000318"/>
    <property type="project" value="GO_Central"/>
</dbReference>
<dbReference type="CDD" id="cd05687">
    <property type="entry name" value="S1_RPS1_repeat_ec1_hs1"/>
    <property type="match status" value="1"/>
</dbReference>
<dbReference type="CDD" id="cd04465">
    <property type="entry name" value="S1_RPS1_repeat_ec2_hs2"/>
    <property type="match status" value="1"/>
</dbReference>
<dbReference type="CDD" id="cd05688">
    <property type="entry name" value="S1_RPS1_repeat_ec3"/>
    <property type="match status" value="1"/>
</dbReference>
<dbReference type="CDD" id="cd05689">
    <property type="entry name" value="S1_RPS1_repeat_ec4"/>
    <property type="match status" value="1"/>
</dbReference>
<dbReference type="CDD" id="cd05690">
    <property type="entry name" value="S1_RPS1_repeat_ec5"/>
    <property type="match status" value="1"/>
</dbReference>
<dbReference type="CDD" id="cd05691">
    <property type="entry name" value="S1_RPS1_repeat_ec6"/>
    <property type="match status" value="1"/>
</dbReference>
<dbReference type="FunFam" id="2.40.50.140:FF:000011">
    <property type="entry name" value="30S ribosomal protein S1"/>
    <property type="match status" value="1"/>
</dbReference>
<dbReference type="FunFam" id="2.40.50.140:FF:000016">
    <property type="entry name" value="30S ribosomal protein S1"/>
    <property type="match status" value="1"/>
</dbReference>
<dbReference type="FunFam" id="2.40.50.140:FF:000018">
    <property type="entry name" value="30S ribosomal protein S1"/>
    <property type="match status" value="1"/>
</dbReference>
<dbReference type="FunFam" id="2.40.50.140:FF:000021">
    <property type="entry name" value="30S ribosomal protein S1"/>
    <property type="match status" value="1"/>
</dbReference>
<dbReference type="Gene3D" id="2.40.50.140">
    <property type="entry name" value="Nucleic acid-binding proteins"/>
    <property type="match status" value="6"/>
</dbReference>
<dbReference type="InterPro" id="IPR012340">
    <property type="entry name" value="NA-bd_OB-fold"/>
</dbReference>
<dbReference type="InterPro" id="IPR050437">
    <property type="entry name" value="Ribos_protein_bS1-like"/>
</dbReference>
<dbReference type="InterPro" id="IPR000110">
    <property type="entry name" value="Ribosomal_bS1"/>
</dbReference>
<dbReference type="InterPro" id="IPR035104">
    <property type="entry name" value="Ribosomal_protein_S1-like"/>
</dbReference>
<dbReference type="InterPro" id="IPR003029">
    <property type="entry name" value="S1_domain"/>
</dbReference>
<dbReference type="NCBIfam" id="NF004952">
    <property type="entry name" value="PRK06299.1-2"/>
    <property type="match status" value="1"/>
</dbReference>
<dbReference type="NCBIfam" id="NF004954">
    <property type="entry name" value="PRK06299.1-4"/>
    <property type="match status" value="1"/>
</dbReference>
<dbReference type="NCBIfam" id="TIGR00717">
    <property type="entry name" value="rpsA"/>
    <property type="match status" value="1"/>
</dbReference>
<dbReference type="PANTHER" id="PTHR10724">
    <property type="entry name" value="30S RIBOSOMAL PROTEIN S1"/>
    <property type="match status" value="1"/>
</dbReference>
<dbReference type="PANTHER" id="PTHR10724:SF7">
    <property type="entry name" value="SMALL RIBOSOMAL SUBUNIT PROTEIN BS1C"/>
    <property type="match status" value="1"/>
</dbReference>
<dbReference type="Pfam" id="PF00575">
    <property type="entry name" value="S1"/>
    <property type="match status" value="6"/>
</dbReference>
<dbReference type="PIRSF" id="PIRSF002111">
    <property type="entry name" value="RpsA"/>
    <property type="match status" value="1"/>
</dbReference>
<dbReference type="PRINTS" id="PR00681">
    <property type="entry name" value="RIBOSOMALS1"/>
</dbReference>
<dbReference type="SMART" id="SM00316">
    <property type="entry name" value="S1"/>
    <property type="match status" value="6"/>
</dbReference>
<dbReference type="SUPFAM" id="SSF50249">
    <property type="entry name" value="Nucleic acid-binding proteins"/>
    <property type="match status" value="6"/>
</dbReference>
<dbReference type="PROSITE" id="PS50126">
    <property type="entry name" value="S1"/>
    <property type="match status" value="6"/>
</dbReference>
<feature type="chain" id="PRO_0000320264" description="Small ribosomal subunit protein bS1">
    <location>
        <begin position="1"/>
        <end position="561"/>
    </location>
</feature>
<feature type="domain" description="S1 motif 1" evidence="2">
    <location>
        <begin position="22"/>
        <end position="88"/>
    </location>
</feature>
<feature type="domain" description="S1 motif 2" evidence="2">
    <location>
        <begin position="106"/>
        <end position="172"/>
    </location>
</feature>
<feature type="domain" description="S1 motif 3" evidence="2">
    <location>
        <begin position="193"/>
        <end position="261"/>
    </location>
</feature>
<feature type="domain" description="S1 motif 4" evidence="2">
    <location>
        <begin position="278"/>
        <end position="348"/>
    </location>
</feature>
<feature type="domain" description="S1 motif 5" evidence="2">
    <location>
        <begin position="365"/>
        <end position="435"/>
    </location>
</feature>
<feature type="domain" description="S1 motif 6" evidence="2">
    <location>
        <begin position="452"/>
        <end position="521"/>
    </location>
</feature>
<sequence length="561" mass="61177">MSMENFAQLLEESFTLQEMNPGEVITAEVVAIDQNFVTVNAGLKSESLIDVAEFKNAQGEIEVKVGDFVTVTIESVENGFGETKLSREKAKRAADWIALEEAMENGDILSGIINGKVKGGLTVMISSIRAFLPGSLVDVRPVKDTSHFEGKEIEFKVIKLDKKRNNVVVSRRAVLEATLGEERKALLENLQEGSVIKGIVKNITDYGAFVDLGGIDGLLHITDLAWRRVKHPSEVLEVGQEVEAKVLKFDQEKQRVSLGMKQLGEDPWSGLTRRYPQGTRLFGKVSNLTDYGAFVEIEQGIEGLVHVSEMDWTNKNVHPSKVVQLGDEVEVMILEIDEGRRRISLGMKQCQANPWEEFAANHNKGDKISGAVKSITDFGVFVGLPGGIDGLVHLSDLSWTESGEEAVRKYKKGEEVEAVVLAIDVEKERISLGIKQLEGDPFGNFISVNDKGSLVKGSVKSVDAKGAVIALSDEVEGYLPASEFAADRVEDLTTKLKEGDEVEAVIVTVDRKNRSIKLSVKAKDAKESREALNSVNAAANANAGTTSLGDLLKAKLSGEQE</sequence>
<comment type="function">
    <text evidence="1">Binds mRNA; thus facilitating recognition of the initiation point. It is needed to translate mRNA with a short Shine-Dalgarno (SD) purine-rich sequence (By similarity).</text>
</comment>
<comment type="miscellaneous">
    <text>Present in outer membrane vesicle formulations which are used as vaccines in human.</text>
</comment>
<comment type="similarity">
    <text evidence="3">Belongs to the bacterial ribosomal protein bS1 family.</text>
</comment>
<reference key="1">
    <citation type="journal article" date="2000" name="Science">
        <title>Complete genome sequence of Neisseria meningitidis serogroup B strain MC58.</title>
        <authorList>
            <person name="Tettelin H."/>
            <person name="Saunders N.J."/>
            <person name="Heidelberg J.F."/>
            <person name="Jeffries A.C."/>
            <person name="Nelson K.E."/>
            <person name="Eisen J.A."/>
            <person name="Ketchum K.A."/>
            <person name="Hood D.W."/>
            <person name="Peden J.F."/>
            <person name="Dodson R.J."/>
            <person name="Nelson W.C."/>
            <person name="Gwinn M.L."/>
            <person name="DeBoy R.T."/>
            <person name="Peterson J.D."/>
            <person name="Hickey E.K."/>
            <person name="Haft D.H."/>
            <person name="Salzberg S.L."/>
            <person name="White O."/>
            <person name="Fleischmann R.D."/>
            <person name="Dougherty B.A."/>
            <person name="Mason T.M."/>
            <person name="Ciecko A."/>
            <person name="Parksey D.S."/>
            <person name="Blair E."/>
            <person name="Cittone H."/>
            <person name="Clark E.B."/>
            <person name="Cotton M.D."/>
            <person name="Utterback T.R."/>
            <person name="Khouri H.M."/>
            <person name="Qin H."/>
            <person name="Vamathevan J.J."/>
            <person name="Gill J."/>
            <person name="Scarlato V."/>
            <person name="Masignani V."/>
            <person name="Pizza M."/>
            <person name="Grandi G."/>
            <person name="Sun L."/>
            <person name="Smith H.O."/>
            <person name="Fraser C.M."/>
            <person name="Moxon E.R."/>
            <person name="Rappuoli R."/>
            <person name="Venter J.C."/>
        </authorList>
    </citation>
    <scope>NUCLEOTIDE SEQUENCE [LARGE SCALE GENOMIC DNA]</scope>
    <source>
        <strain>ATCC BAA-335 / MC58</strain>
    </source>
</reference>
<reference key="2">
    <citation type="journal article" date="2006" name="Proteomics">
        <title>Proteomic analysis of a meningococcal outer membrane vesicle vaccine prepared from the group B strain NZ98/254.</title>
        <authorList>
            <person name="Vipond C."/>
            <person name="Suker J."/>
            <person name="Jones C."/>
            <person name="Tang C."/>
            <person name="Feavers I.M."/>
            <person name="Wheeler J.X."/>
        </authorList>
    </citation>
    <scope>IDENTIFICATION BY MASS SPECTROMETRY [LARGE SCALE ANALYSIS]</scope>
    <source>
        <strain>NZ98/254 / Serogroup B</strain>
    </source>
</reference>